<accession>A5VKR5</accession>
<feature type="chain" id="PRO_1000059719" description="Exodeoxyribonuclease 7 small subunit">
    <location>
        <begin position="1"/>
        <end position="93"/>
    </location>
</feature>
<feature type="region of interest" description="Disordered" evidence="2">
    <location>
        <begin position="61"/>
        <end position="93"/>
    </location>
</feature>
<feature type="compositionally biased region" description="Basic and acidic residues" evidence="2">
    <location>
        <begin position="61"/>
        <end position="75"/>
    </location>
</feature>
<protein>
    <recommendedName>
        <fullName evidence="1">Exodeoxyribonuclease 7 small subunit</fullName>
        <ecNumber evidence="1">3.1.11.6</ecNumber>
    </recommendedName>
    <alternativeName>
        <fullName evidence="1">Exodeoxyribonuclease VII small subunit</fullName>
        <shortName evidence="1">Exonuclease VII small subunit</shortName>
    </alternativeName>
</protein>
<evidence type="ECO:0000255" key="1">
    <source>
        <dbReference type="HAMAP-Rule" id="MF_00337"/>
    </source>
</evidence>
<evidence type="ECO:0000256" key="2">
    <source>
        <dbReference type="SAM" id="MobiDB-lite"/>
    </source>
</evidence>
<organism>
    <name type="scientific">Limosilactobacillus reuteri (strain DSM 20016)</name>
    <name type="common">Lactobacillus reuteri</name>
    <dbReference type="NCBI Taxonomy" id="557436"/>
    <lineage>
        <taxon>Bacteria</taxon>
        <taxon>Bacillati</taxon>
        <taxon>Bacillota</taxon>
        <taxon>Bacilli</taxon>
        <taxon>Lactobacillales</taxon>
        <taxon>Lactobacillaceae</taxon>
        <taxon>Limosilactobacillus</taxon>
    </lineage>
</organism>
<name>EX7S_LIMRD</name>
<proteinExistence type="inferred from homology"/>
<comment type="function">
    <text evidence="1">Bidirectionally degrades single-stranded DNA into large acid-insoluble oligonucleotides, which are then degraded further into small acid-soluble oligonucleotides.</text>
</comment>
<comment type="catalytic activity">
    <reaction evidence="1">
        <text>Exonucleolytic cleavage in either 5'- to 3'- or 3'- to 5'-direction to yield nucleoside 5'-phosphates.</text>
        <dbReference type="EC" id="3.1.11.6"/>
    </reaction>
</comment>
<comment type="subunit">
    <text evidence="1">Heterooligomer composed of large and small subunits.</text>
</comment>
<comment type="subcellular location">
    <subcellularLocation>
        <location evidence="1">Cytoplasm</location>
    </subcellularLocation>
</comment>
<comment type="similarity">
    <text evidence="1">Belongs to the XseB family.</text>
</comment>
<gene>
    <name evidence="1" type="primary">xseB</name>
    <name type="ordered locus">Lreu_1182</name>
</gene>
<sequence>MATAKPTFEEQLAQLQQIVNHLEQGNVPLEEALQQFQEGIKLSKELQTKLTNAEKTLGHLIDDNGDEKVYEKQTDDPSNNGGGNRGFGSADEQ</sequence>
<dbReference type="EC" id="3.1.11.6" evidence="1"/>
<dbReference type="EMBL" id="CP000705">
    <property type="protein sequence ID" value="ABQ83439.1"/>
    <property type="molecule type" value="Genomic_DNA"/>
</dbReference>
<dbReference type="RefSeq" id="WP_003663862.1">
    <property type="nucleotide sequence ID" value="NZ_AZDD01000001.1"/>
</dbReference>
<dbReference type="SMR" id="A5VKR5"/>
<dbReference type="STRING" id="557436.Lreu_1182"/>
<dbReference type="KEGG" id="lre:Lreu_1182"/>
<dbReference type="PATRIC" id="fig|557436.17.peg.48"/>
<dbReference type="eggNOG" id="COG1722">
    <property type="taxonomic scope" value="Bacteria"/>
</dbReference>
<dbReference type="HOGENOM" id="CLU_145918_3_2_9"/>
<dbReference type="Proteomes" id="UP000001991">
    <property type="component" value="Chromosome"/>
</dbReference>
<dbReference type="GO" id="GO:0005829">
    <property type="term" value="C:cytosol"/>
    <property type="evidence" value="ECO:0007669"/>
    <property type="project" value="TreeGrafter"/>
</dbReference>
<dbReference type="GO" id="GO:0009318">
    <property type="term" value="C:exodeoxyribonuclease VII complex"/>
    <property type="evidence" value="ECO:0007669"/>
    <property type="project" value="InterPro"/>
</dbReference>
<dbReference type="GO" id="GO:0008855">
    <property type="term" value="F:exodeoxyribonuclease VII activity"/>
    <property type="evidence" value="ECO:0007669"/>
    <property type="project" value="UniProtKB-UniRule"/>
</dbReference>
<dbReference type="GO" id="GO:0006308">
    <property type="term" value="P:DNA catabolic process"/>
    <property type="evidence" value="ECO:0007669"/>
    <property type="project" value="UniProtKB-UniRule"/>
</dbReference>
<dbReference type="Gene3D" id="1.10.287.1040">
    <property type="entry name" value="Exonuclease VII, small subunit"/>
    <property type="match status" value="1"/>
</dbReference>
<dbReference type="HAMAP" id="MF_00337">
    <property type="entry name" value="Exonuc_7_S"/>
    <property type="match status" value="1"/>
</dbReference>
<dbReference type="InterPro" id="IPR003761">
    <property type="entry name" value="Exonuc_VII_S"/>
</dbReference>
<dbReference type="InterPro" id="IPR037004">
    <property type="entry name" value="Exonuc_VII_ssu_sf"/>
</dbReference>
<dbReference type="NCBIfam" id="NF002138">
    <property type="entry name" value="PRK00977.1-2"/>
    <property type="match status" value="1"/>
</dbReference>
<dbReference type="NCBIfam" id="TIGR01280">
    <property type="entry name" value="xseB"/>
    <property type="match status" value="1"/>
</dbReference>
<dbReference type="PANTHER" id="PTHR34137">
    <property type="entry name" value="EXODEOXYRIBONUCLEASE 7 SMALL SUBUNIT"/>
    <property type="match status" value="1"/>
</dbReference>
<dbReference type="PANTHER" id="PTHR34137:SF1">
    <property type="entry name" value="EXODEOXYRIBONUCLEASE 7 SMALL SUBUNIT"/>
    <property type="match status" value="1"/>
</dbReference>
<dbReference type="Pfam" id="PF02609">
    <property type="entry name" value="Exonuc_VII_S"/>
    <property type="match status" value="1"/>
</dbReference>
<dbReference type="SUPFAM" id="SSF116842">
    <property type="entry name" value="XseB-like"/>
    <property type="match status" value="1"/>
</dbReference>
<keyword id="KW-0963">Cytoplasm</keyword>
<keyword id="KW-0269">Exonuclease</keyword>
<keyword id="KW-0378">Hydrolase</keyword>
<keyword id="KW-0540">Nuclease</keyword>
<keyword id="KW-1185">Reference proteome</keyword>
<reference key="1">
    <citation type="journal article" date="2011" name="PLoS Genet.">
        <title>The evolution of host specialization in the vertebrate gut symbiont Lactobacillus reuteri.</title>
        <authorList>
            <person name="Frese S.A."/>
            <person name="Benson A.K."/>
            <person name="Tannock G.W."/>
            <person name="Loach D.M."/>
            <person name="Kim J."/>
            <person name="Zhang M."/>
            <person name="Oh P.L."/>
            <person name="Heng N.C."/>
            <person name="Patil P.B."/>
            <person name="Juge N."/>
            <person name="Mackenzie D.A."/>
            <person name="Pearson B.M."/>
            <person name="Lapidus A."/>
            <person name="Dalin E."/>
            <person name="Tice H."/>
            <person name="Goltsman E."/>
            <person name="Land M."/>
            <person name="Hauser L."/>
            <person name="Ivanova N."/>
            <person name="Kyrpides N.C."/>
            <person name="Walter J."/>
        </authorList>
    </citation>
    <scope>NUCLEOTIDE SEQUENCE [LARGE SCALE GENOMIC DNA]</scope>
    <source>
        <strain>DSM 20016</strain>
    </source>
</reference>